<keyword id="KW-0520">NAD</keyword>
<keyword id="KW-0560">Oxidoreductase</keyword>
<reference key="1">
    <citation type="journal article" date="2004" name="Proc. Natl. Acad. Sci. U.S.A.">
        <title>Complete genomes of two clinical Staphylococcus aureus strains: evidence for the rapid evolution of virulence and drug resistance.</title>
        <authorList>
            <person name="Holden M.T.G."/>
            <person name="Feil E.J."/>
            <person name="Lindsay J.A."/>
            <person name="Peacock S.J."/>
            <person name="Day N.P.J."/>
            <person name="Enright M.C."/>
            <person name="Foster T.J."/>
            <person name="Moore C.E."/>
            <person name="Hurst L."/>
            <person name="Atkin R."/>
            <person name="Barron A."/>
            <person name="Bason N."/>
            <person name="Bentley S.D."/>
            <person name="Chillingworth C."/>
            <person name="Chillingworth T."/>
            <person name="Churcher C."/>
            <person name="Clark L."/>
            <person name="Corton C."/>
            <person name="Cronin A."/>
            <person name="Doggett J."/>
            <person name="Dowd L."/>
            <person name="Feltwell T."/>
            <person name="Hance Z."/>
            <person name="Harris B."/>
            <person name="Hauser H."/>
            <person name="Holroyd S."/>
            <person name="Jagels K."/>
            <person name="James K.D."/>
            <person name="Lennard N."/>
            <person name="Line A."/>
            <person name="Mayes R."/>
            <person name="Moule S."/>
            <person name="Mungall K."/>
            <person name="Ormond D."/>
            <person name="Quail M.A."/>
            <person name="Rabbinowitsch E."/>
            <person name="Rutherford K.M."/>
            <person name="Sanders M."/>
            <person name="Sharp S."/>
            <person name="Simmonds M."/>
            <person name="Stevens K."/>
            <person name="Whitehead S."/>
            <person name="Barrell B.G."/>
            <person name="Spratt B.G."/>
            <person name="Parkhill J."/>
        </authorList>
    </citation>
    <scope>NUCLEOTIDE SEQUENCE [LARGE SCALE GENOMIC DNA]</scope>
    <source>
        <strain>MSSA476</strain>
    </source>
</reference>
<comment type="catalytic activity">
    <reaction evidence="1">
        <text>L-glutamate 5-semialdehyde + NAD(+) + H2O = L-glutamate + NADH + 2 H(+)</text>
        <dbReference type="Rhea" id="RHEA:30235"/>
        <dbReference type="ChEBI" id="CHEBI:15377"/>
        <dbReference type="ChEBI" id="CHEBI:15378"/>
        <dbReference type="ChEBI" id="CHEBI:29985"/>
        <dbReference type="ChEBI" id="CHEBI:57540"/>
        <dbReference type="ChEBI" id="CHEBI:57945"/>
        <dbReference type="ChEBI" id="CHEBI:58066"/>
        <dbReference type="EC" id="1.2.1.88"/>
    </reaction>
</comment>
<comment type="pathway">
    <text evidence="1">Amino-acid degradation; L-proline degradation into L-glutamate; L-glutamate from L-proline: step 2/2.</text>
</comment>
<comment type="similarity">
    <text evidence="1">Belongs to the aldehyde dehydrogenase family. RocA subfamily.</text>
</comment>
<proteinExistence type="inferred from homology"/>
<sequence length="514" mass="56808">MVVEFKNEPGYDFSVQENVDMFKKALKDVEKELGQDIPLVINGEKIFKDDKIKSINPADTSQVIANASKATKQDVEDAFKAANEAYKSWKTWSANDRAELMLRVSAIIRRRKAEIAAIMVYEAGKPWDEAVGDAAEGIDFIEYYARSMMDLAQGKPVLDREGEHNKYFYKSIGTGVTIPPWNFPFAIMAGTTLAPVVAGNIVLLKPAEDTPYIAYKLMGILEEAGLPKGVVNFVPGDPKEIGDYLVDHKDTHFVTFTGSRATGTRIYERSAVVQEGQNFLKRVIAEMGGKDAIVVDENIDTDMAAEAIVTSAFGFSGQKCSACSRAIVHKDVYDEVLEKSIKLTKELTLGNTVDNTYMGPVINKKQFDKIKNYIEIGKEEGKLEQGGGTDDSKGYFVEPTIISGLKSKDRIMQEEIFGPVVGFVKVNDFDEAIEVANDTDYGLTGAVITNNREHWIKAVNEFDVGNLYLNRGCTSAVVGYHPFGGFKMSGTDAKTGSPDYLLHFLEQKVVSEMF</sequence>
<evidence type="ECO:0000255" key="1">
    <source>
        <dbReference type="HAMAP-Rule" id="MF_00733"/>
    </source>
</evidence>
<dbReference type="EC" id="1.2.1.88" evidence="1"/>
<dbReference type="EMBL" id="BX571857">
    <property type="protein sequence ID" value="CAG44256.1"/>
    <property type="molecule type" value="Genomic_DNA"/>
</dbReference>
<dbReference type="RefSeq" id="WP_000259686.1">
    <property type="nucleotide sequence ID" value="NC_002953.3"/>
</dbReference>
<dbReference type="SMR" id="Q6G6C0"/>
<dbReference type="KEGG" id="sas:SAS2440"/>
<dbReference type="HOGENOM" id="CLU_005391_0_0_9"/>
<dbReference type="UniPathway" id="UPA00261">
    <property type="reaction ID" value="UER00374"/>
</dbReference>
<dbReference type="GO" id="GO:0009898">
    <property type="term" value="C:cytoplasmic side of plasma membrane"/>
    <property type="evidence" value="ECO:0007669"/>
    <property type="project" value="TreeGrafter"/>
</dbReference>
<dbReference type="GO" id="GO:0003842">
    <property type="term" value="F:1-pyrroline-5-carboxylate dehydrogenase activity"/>
    <property type="evidence" value="ECO:0007669"/>
    <property type="project" value="UniProtKB-UniRule"/>
</dbReference>
<dbReference type="GO" id="GO:0006537">
    <property type="term" value="P:glutamate biosynthetic process"/>
    <property type="evidence" value="ECO:0007669"/>
    <property type="project" value="UniProtKB-UniRule"/>
</dbReference>
<dbReference type="GO" id="GO:0010133">
    <property type="term" value="P:proline catabolic process to glutamate"/>
    <property type="evidence" value="ECO:0007669"/>
    <property type="project" value="UniProtKB-UniPathway"/>
</dbReference>
<dbReference type="CDD" id="cd07124">
    <property type="entry name" value="ALDH_PutA-P5CDH-RocA"/>
    <property type="match status" value="1"/>
</dbReference>
<dbReference type="FunFam" id="3.40.309.10:FF:000005">
    <property type="entry name" value="1-pyrroline-5-carboxylate dehydrogenase 1"/>
    <property type="match status" value="1"/>
</dbReference>
<dbReference type="FunFam" id="3.40.605.10:FF:000045">
    <property type="entry name" value="1-pyrroline-5-carboxylate dehydrogenase 1"/>
    <property type="match status" value="1"/>
</dbReference>
<dbReference type="Gene3D" id="3.40.605.10">
    <property type="entry name" value="Aldehyde Dehydrogenase, Chain A, domain 1"/>
    <property type="match status" value="1"/>
</dbReference>
<dbReference type="Gene3D" id="3.40.309.10">
    <property type="entry name" value="Aldehyde Dehydrogenase, Chain A, domain 2"/>
    <property type="match status" value="1"/>
</dbReference>
<dbReference type="HAMAP" id="MF_00733">
    <property type="entry name" value="RocA"/>
    <property type="match status" value="1"/>
</dbReference>
<dbReference type="InterPro" id="IPR016161">
    <property type="entry name" value="Ald_DH/histidinol_DH"/>
</dbReference>
<dbReference type="InterPro" id="IPR016163">
    <property type="entry name" value="Ald_DH_C"/>
</dbReference>
<dbReference type="InterPro" id="IPR016160">
    <property type="entry name" value="Ald_DH_CS_CYS"/>
</dbReference>
<dbReference type="InterPro" id="IPR029510">
    <property type="entry name" value="Ald_DH_CS_GLU"/>
</dbReference>
<dbReference type="InterPro" id="IPR016162">
    <property type="entry name" value="Ald_DH_N"/>
</dbReference>
<dbReference type="InterPro" id="IPR015590">
    <property type="entry name" value="Aldehyde_DH_dom"/>
</dbReference>
<dbReference type="InterPro" id="IPR050485">
    <property type="entry name" value="Proline_metab_enzyme"/>
</dbReference>
<dbReference type="InterPro" id="IPR005932">
    <property type="entry name" value="RocA"/>
</dbReference>
<dbReference type="InterPro" id="IPR047597">
    <property type="entry name" value="RocA_bacillales"/>
</dbReference>
<dbReference type="NCBIfam" id="TIGR01237">
    <property type="entry name" value="D1pyr5carbox2"/>
    <property type="match status" value="1"/>
</dbReference>
<dbReference type="NCBIfam" id="NF002852">
    <property type="entry name" value="PRK03137.1"/>
    <property type="match status" value="1"/>
</dbReference>
<dbReference type="PANTHER" id="PTHR42862">
    <property type="entry name" value="DELTA-1-PYRROLINE-5-CARBOXYLATE DEHYDROGENASE 1, ISOFORM A-RELATED"/>
    <property type="match status" value="1"/>
</dbReference>
<dbReference type="PANTHER" id="PTHR42862:SF1">
    <property type="entry name" value="DELTA-1-PYRROLINE-5-CARBOXYLATE DEHYDROGENASE 2, ISOFORM A-RELATED"/>
    <property type="match status" value="1"/>
</dbReference>
<dbReference type="Pfam" id="PF00171">
    <property type="entry name" value="Aldedh"/>
    <property type="match status" value="1"/>
</dbReference>
<dbReference type="SUPFAM" id="SSF53720">
    <property type="entry name" value="ALDH-like"/>
    <property type="match status" value="1"/>
</dbReference>
<dbReference type="PROSITE" id="PS00070">
    <property type="entry name" value="ALDEHYDE_DEHYDR_CYS"/>
    <property type="match status" value="1"/>
</dbReference>
<dbReference type="PROSITE" id="PS00687">
    <property type="entry name" value="ALDEHYDE_DEHYDR_GLU"/>
    <property type="match status" value="1"/>
</dbReference>
<gene>
    <name evidence="1" type="primary">rocA</name>
    <name type="ordered locus">SAS2440</name>
</gene>
<accession>Q6G6C0</accession>
<protein>
    <recommendedName>
        <fullName evidence="1">1-pyrroline-5-carboxylate dehydrogenase</fullName>
        <shortName evidence="1">P5C dehydrogenase</shortName>
        <ecNumber evidence="1">1.2.1.88</ecNumber>
    </recommendedName>
    <alternativeName>
        <fullName evidence="1">L-glutamate gamma-semialdehyde dehydrogenase</fullName>
    </alternativeName>
</protein>
<organism>
    <name type="scientific">Staphylococcus aureus (strain MSSA476)</name>
    <dbReference type="NCBI Taxonomy" id="282459"/>
    <lineage>
        <taxon>Bacteria</taxon>
        <taxon>Bacillati</taxon>
        <taxon>Bacillota</taxon>
        <taxon>Bacilli</taxon>
        <taxon>Bacillales</taxon>
        <taxon>Staphylococcaceae</taxon>
        <taxon>Staphylococcus</taxon>
    </lineage>
</organism>
<feature type="chain" id="PRO_0000056518" description="1-pyrroline-5-carboxylate dehydrogenase">
    <location>
        <begin position="1"/>
        <end position="514"/>
    </location>
</feature>
<feature type="active site" evidence="1">
    <location>
        <position position="286"/>
    </location>
</feature>
<feature type="active site" evidence="1">
    <location>
        <position position="320"/>
    </location>
</feature>
<name>ROCA_STAAS</name>